<protein>
    <recommendedName>
        <fullName>Respiratory supercomplex factor 1, mitochondrial</fullName>
    </recommendedName>
</protein>
<dbReference type="EMBL" id="EQ962657">
    <property type="protein sequence ID" value="EED15192.1"/>
    <property type="molecule type" value="Genomic_DNA"/>
</dbReference>
<dbReference type="RefSeq" id="XP_002485145.1">
    <property type="nucleotide sequence ID" value="XM_002485100.1"/>
</dbReference>
<dbReference type="STRING" id="441959.B8MJJ2"/>
<dbReference type="GeneID" id="8099557"/>
<dbReference type="VEuPathDB" id="FungiDB:TSTA_046460"/>
<dbReference type="eggNOG" id="KOG4431">
    <property type="taxonomic scope" value="Eukaryota"/>
</dbReference>
<dbReference type="HOGENOM" id="CLU_087356_0_2_1"/>
<dbReference type="InParanoid" id="B8MJJ2"/>
<dbReference type="OMA" id="YNENAFQ"/>
<dbReference type="OrthoDB" id="6604018at2759"/>
<dbReference type="PhylomeDB" id="B8MJJ2"/>
<dbReference type="Proteomes" id="UP000001745">
    <property type="component" value="Unassembled WGS sequence"/>
</dbReference>
<dbReference type="GO" id="GO:0031966">
    <property type="term" value="C:mitochondrial membrane"/>
    <property type="evidence" value="ECO:0007669"/>
    <property type="project" value="UniProtKB-SubCell"/>
</dbReference>
<dbReference type="GO" id="GO:0097250">
    <property type="term" value="P:mitochondrial respirasome assembly"/>
    <property type="evidence" value="ECO:0007669"/>
    <property type="project" value="TreeGrafter"/>
</dbReference>
<dbReference type="Gene3D" id="6.10.140.1320">
    <property type="match status" value="1"/>
</dbReference>
<dbReference type="InterPro" id="IPR007667">
    <property type="entry name" value="Hypoxia_induced_domain"/>
</dbReference>
<dbReference type="InterPro" id="IPR050355">
    <property type="entry name" value="RCF1"/>
</dbReference>
<dbReference type="PANTHER" id="PTHR12297:SF3">
    <property type="entry name" value="HIG1 DOMAIN FAMILY MEMBER 1A"/>
    <property type="match status" value="1"/>
</dbReference>
<dbReference type="PANTHER" id="PTHR12297">
    <property type="entry name" value="HYPOXIA-INDUCBILE GENE 1 HIG1 -RELATED"/>
    <property type="match status" value="1"/>
</dbReference>
<dbReference type="Pfam" id="PF04588">
    <property type="entry name" value="HIG_1_N"/>
    <property type="match status" value="1"/>
</dbReference>
<dbReference type="PROSITE" id="PS51503">
    <property type="entry name" value="HIG1"/>
    <property type="match status" value="1"/>
</dbReference>
<sequence length="188" mass="21431">MADQADLLESPQFEEETSMQKFKRRLKEEPLIPLGCAATCYALYRAYRSGKAKDSVEMNRMFRARIYAQFFTLLAVVAGGMYYKTERKQRREFERKVEERKAQEKRDAWLRELEAREKEDKGWRERHAAVSEAANNPVGVSAVVAGKKEEEEKGVDGNVNQAPQEEGGVKRGTGILDAVKALVRGKKD</sequence>
<name>RCF1_TALSN</name>
<keyword id="KW-0175">Coiled coil</keyword>
<keyword id="KW-0472">Membrane</keyword>
<keyword id="KW-0496">Mitochondrion</keyword>
<keyword id="KW-1185">Reference proteome</keyword>
<keyword id="KW-0812">Transmembrane</keyword>
<keyword id="KW-1133">Transmembrane helix</keyword>
<comment type="function">
    <text evidence="1">Cytochrome c oxidase subunit which plays a role in assembly of respiratory supercomplexes.</text>
</comment>
<comment type="subunit">
    <text evidence="1">Associates with the respiratory chain complex III/complex IV supercomplex.</text>
</comment>
<comment type="subcellular location">
    <subcellularLocation>
        <location evidence="3">Mitochondrion membrane</location>
        <topology evidence="3">Multi-pass membrane protein</topology>
    </subcellularLocation>
</comment>
<comment type="similarity">
    <text evidence="5">Belongs to the RCF1 family.</text>
</comment>
<evidence type="ECO:0000250" key="1"/>
<evidence type="ECO:0000255" key="2"/>
<evidence type="ECO:0000255" key="3">
    <source>
        <dbReference type="PROSITE-ProRule" id="PRU00836"/>
    </source>
</evidence>
<evidence type="ECO:0000256" key="4">
    <source>
        <dbReference type="SAM" id="MobiDB-lite"/>
    </source>
</evidence>
<evidence type="ECO:0000305" key="5"/>
<proteinExistence type="inferred from homology"/>
<reference key="1">
    <citation type="journal article" date="2015" name="Genome Announc.">
        <title>Genome sequence of the AIDS-associated pathogen Penicillium marneffei (ATCC18224) and its near taxonomic relative Talaromyces stipitatus (ATCC10500).</title>
        <authorList>
            <person name="Nierman W.C."/>
            <person name="Fedorova-Abrams N.D."/>
            <person name="Andrianopoulos A."/>
        </authorList>
    </citation>
    <scope>NUCLEOTIDE SEQUENCE [LARGE SCALE GENOMIC DNA]</scope>
    <source>
        <strain>ATCC 10500 / CBS 375.48 / QM 6759 / NRRL 1006</strain>
    </source>
</reference>
<gene>
    <name type="primary">rcf1</name>
    <name type="synonym">aim31</name>
    <name type="ORF">TSTA_046460</name>
</gene>
<organism>
    <name type="scientific">Talaromyces stipitatus (strain ATCC 10500 / CBS 375.48 / QM 6759 / NRRL 1006)</name>
    <name type="common">Penicillium stipitatum</name>
    <dbReference type="NCBI Taxonomy" id="441959"/>
    <lineage>
        <taxon>Eukaryota</taxon>
        <taxon>Fungi</taxon>
        <taxon>Dikarya</taxon>
        <taxon>Ascomycota</taxon>
        <taxon>Pezizomycotina</taxon>
        <taxon>Eurotiomycetes</taxon>
        <taxon>Eurotiomycetidae</taxon>
        <taxon>Eurotiales</taxon>
        <taxon>Trichocomaceae</taxon>
        <taxon>Talaromyces</taxon>
        <taxon>Talaromyces sect. Talaromyces</taxon>
    </lineage>
</organism>
<accession>B8MJJ2</accession>
<feature type="chain" id="PRO_0000399660" description="Respiratory supercomplex factor 1, mitochondrial">
    <location>
        <begin position="1"/>
        <end position="188"/>
    </location>
</feature>
<feature type="transmembrane region" description="Helical" evidence="3">
    <location>
        <begin position="30"/>
        <end position="46"/>
    </location>
</feature>
<feature type="transmembrane region" description="Helical" evidence="3">
    <location>
        <begin position="66"/>
        <end position="83"/>
    </location>
</feature>
<feature type="domain" description="HIG1" evidence="3">
    <location>
        <begin position="3"/>
        <end position="94"/>
    </location>
</feature>
<feature type="region of interest" description="Disordered" evidence="4">
    <location>
        <begin position="147"/>
        <end position="171"/>
    </location>
</feature>
<feature type="coiled-coil region" evidence="2">
    <location>
        <begin position="83"/>
        <end position="119"/>
    </location>
</feature>